<name>PYRG_LEPIC</name>
<reference key="1">
    <citation type="journal article" date="2004" name="J. Bacteriol.">
        <title>Comparative genomics of two Leptospira interrogans serovars reveals novel insights into physiology and pathogenesis.</title>
        <authorList>
            <person name="Nascimento A.L.T.O."/>
            <person name="Ko A.I."/>
            <person name="Martins E.A.L."/>
            <person name="Monteiro-Vitorello C.B."/>
            <person name="Ho P.L."/>
            <person name="Haake D.A."/>
            <person name="Verjovski-Almeida S."/>
            <person name="Hartskeerl R.A."/>
            <person name="Marques M.V."/>
            <person name="Oliveira M.C."/>
            <person name="Menck C.F.M."/>
            <person name="Leite L.C.C."/>
            <person name="Carrer H."/>
            <person name="Coutinho L.L."/>
            <person name="Degrave W.M."/>
            <person name="Dellagostin O.A."/>
            <person name="El-Dorry H."/>
            <person name="Ferro E.S."/>
            <person name="Ferro M.I.T."/>
            <person name="Furlan L.R."/>
            <person name="Gamberini M."/>
            <person name="Giglioti E.A."/>
            <person name="Goes-Neto A."/>
            <person name="Goldman G.H."/>
            <person name="Goldman M.H.S."/>
            <person name="Harakava R."/>
            <person name="Jeronimo S.M.B."/>
            <person name="Junqueira-de-Azevedo I.L.M."/>
            <person name="Kimura E.T."/>
            <person name="Kuramae E.E."/>
            <person name="Lemos E.G.M."/>
            <person name="Lemos M.V.F."/>
            <person name="Marino C.L."/>
            <person name="Nunes L.R."/>
            <person name="de Oliveira R.C."/>
            <person name="Pereira G.G."/>
            <person name="Reis M.S."/>
            <person name="Schriefer A."/>
            <person name="Siqueira W.J."/>
            <person name="Sommer P."/>
            <person name="Tsai S.M."/>
            <person name="Simpson A.J.G."/>
            <person name="Ferro J.A."/>
            <person name="Camargo L.E.A."/>
            <person name="Kitajima J.P."/>
            <person name="Setubal J.C."/>
            <person name="Van Sluys M.A."/>
        </authorList>
    </citation>
    <scope>NUCLEOTIDE SEQUENCE [LARGE SCALE GENOMIC DNA]</scope>
    <source>
        <strain>Fiocruz L1-130</strain>
    </source>
</reference>
<gene>
    <name evidence="1" type="primary">pyrG</name>
    <name type="ordered locus">LIC_11540</name>
</gene>
<proteinExistence type="inferred from homology"/>
<sequence length="538" mass="60517">MSRTKFIFVTGGVSSSLGKGVTVAALGCLLESRGYTVSLQKMDPYINIDPGTMSPYQHGEVYVTADGAETDLDLGYYERFTHSKLTRKNSVSTGQIYNTVIQRERKGDYLGRTVQVVPHITNEIRNRMYIVAREENPDFIIVEIGGTVGDIESIPFLEAIRQMRYEHGSSNVLFVHLTLVPTITAAGEAKTKPTQHSVKELLGLGIQPDILVCRVSQPMTKEMKNKLSLFCNVKEENVISASDISTSIYEIPKMYKEEKLDEVVLKTMGMELRESNFSEWDKMVKGLLTTKQTVQIAVVGKYISLQDAYRSIYESLSHGGIAHDTKVEFIKVDPENLNKDSYVEILKKVHGILVPGGFGDRGIEGKILAIQYARTNGIPFLGICLGMQCAVVEYGRNVLGLKDANSTEIRPDTEHPVISLLEEQNDIEQMGGTMRLGSYPCKVKENTLSYSEYKSILIHERHRHRFEFTNRYRKQYEENGMIIAGTSPDDNLVEIVEIPKHNWFIGVQFHPEFQSKPTLPHPLFAGFIRASVKYSKKG</sequence>
<accession>Q72S46</accession>
<organism>
    <name type="scientific">Leptospira interrogans serogroup Icterohaemorrhagiae serovar copenhageni (strain Fiocruz L1-130)</name>
    <dbReference type="NCBI Taxonomy" id="267671"/>
    <lineage>
        <taxon>Bacteria</taxon>
        <taxon>Pseudomonadati</taxon>
        <taxon>Spirochaetota</taxon>
        <taxon>Spirochaetia</taxon>
        <taxon>Leptospirales</taxon>
        <taxon>Leptospiraceae</taxon>
        <taxon>Leptospira</taxon>
    </lineage>
</organism>
<protein>
    <recommendedName>
        <fullName evidence="1">CTP synthase</fullName>
        <ecNumber evidence="1">6.3.4.2</ecNumber>
    </recommendedName>
    <alternativeName>
        <fullName evidence="1">Cytidine 5'-triphosphate synthase</fullName>
    </alternativeName>
    <alternativeName>
        <fullName evidence="1">Cytidine triphosphate synthetase</fullName>
        <shortName evidence="1">CTP synthetase</shortName>
        <shortName evidence="1">CTPS</shortName>
    </alternativeName>
    <alternativeName>
        <fullName evidence="1">UTP--ammonia ligase</fullName>
    </alternativeName>
</protein>
<evidence type="ECO:0000255" key="1">
    <source>
        <dbReference type="HAMAP-Rule" id="MF_01227"/>
    </source>
</evidence>
<evidence type="ECO:0000305" key="2"/>
<dbReference type="EC" id="6.3.4.2" evidence="1"/>
<dbReference type="EMBL" id="AE016823">
    <property type="protein sequence ID" value="AAS70136.1"/>
    <property type="status" value="ALT_INIT"/>
    <property type="molecule type" value="Genomic_DNA"/>
</dbReference>
<dbReference type="RefSeq" id="WP_000091728.1">
    <property type="nucleotide sequence ID" value="NC_005823.1"/>
</dbReference>
<dbReference type="SMR" id="Q72S46"/>
<dbReference type="MEROPS" id="C26.964"/>
<dbReference type="KEGG" id="lic:LIC_11540"/>
<dbReference type="HOGENOM" id="CLU_011675_5_0_12"/>
<dbReference type="UniPathway" id="UPA00159">
    <property type="reaction ID" value="UER00277"/>
</dbReference>
<dbReference type="Proteomes" id="UP000007037">
    <property type="component" value="Chromosome I"/>
</dbReference>
<dbReference type="GO" id="GO:0005829">
    <property type="term" value="C:cytosol"/>
    <property type="evidence" value="ECO:0007669"/>
    <property type="project" value="TreeGrafter"/>
</dbReference>
<dbReference type="GO" id="GO:0005524">
    <property type="term" value="F:ATP binding"/>
    <property type="evidence" value="ECO:0007669"/>
    <property type="project" value="UniProtKB-KW"/>
</dbReference>
<dbReference type="GO" id="GO:0003883">
    <property type="term" value="F:CTP synthase activity"/>
    <property type="evidence" value="ECO:0007669"/>
    <property type="project" value="UniProtKB-UniRule"/>
</dbReference>
<dbReference type="GO" id="GO:0004359">
    <property type="term" value="F:glutaminase activity"/>
    <property type="evidence" value="ECO:0007669"/>
    <property type="project" value="RHEA"/>
</dbReference>
<dbReference type="GO" id="GO:0042802">
    <property type="term" value="F:identical protein binding"/>
    <property type="evidence" value="ECO:0007669"/>
    <property type="project" value="TreeGrafter"/>
</dbReference>
<dbReference type="GO" id="GO:0046872">
    <property type="term" value="F:metal ion binding"/>
    <property type="evidence" value="ECO:0007669"/>
    <property type="project" value="UniProtKB-KW"/>
</dbReference>
<dbReference type="GO" id="GO:0044210">
    <property type="term" value="P:'de novo' CTP biosynthetic process"/>
    <property type="evidence" value="ECO:0007669"/>
    <property type="project" value="UniProtKB-UniRule"/>
</dbReference>
<dbReference type="GO" id="GO:0019856">
    <property type="term" value="P:pyrimidine nucleobase biosynthetic process"/>
    <property type="evidence" value="ECO:0007669"/>
    <property type="project" value="TreeGrafter"/>
</dbReference>
<dbReference type="CDD" id="cd03113">
    <property type="entry name" value="CTPS_N"/>
    <property type="match status" value="1"/>
</dbReference>
<dbReference type="CDD" id="cd01746">
    <property type="entry name" value="GATase1_CTP_Synthase"/>
    <property type="match status" value="1"/>
</dbReference>
<dbReference type="FunFam" id="3.40.50.300:FF:000009">
    <property type="entry name" value="CTP synthase"/>
    <property type="match status" value="1"/>
</dbReference>
<dbReference type="FunFam" id="3.40.50.880:FF:000002">
    <property type="entry name" value="CTP synthase"/>
    <property type="match status" value="1"/>
</dbReference>
<dbReference type="Gene3D" id="3.40.50.880">
    <property type="match status" value="1"/>
</dbReference>
<dbReference type="Gene3D" id="3.40.50.300">
    <property type="entry name" value="P-loop containing nucleotide triphosphate hydrolases"/>
    <property type="match status" value="1"/>
</dbReference>
<dbReference type="HAMAP" id="MF_01227">
    <property type="entry name" value="PyrG"/>
    <property type="match status" value="1"/>
</dbReference>
<dbReference type="InterPro" id="IPR029062">
    <property type="entry name" value="Class_I_gatase-like"/>
</dbReference>
<dbReference type="InterPro" id="IPR004468">
    <property type="entry name" value="CTP_synthase"/>
</dbReference>
<dbReference type="InterPro" id="IPR017456">
    <property type="entry name" value="CTP_synthase_N"/>
</dbReference>
<dbReference type="InterPro" id="IPR017926">
    <property type="entry name" value="GATASE"/>
</dbReference>
<dbReference type="InterPro" id="IPR033828">
    <property type="entry name" value="GATase1_CTP_Synthase"/>
</dbReference>
<dbReference type="InterPro" id="IPR027417">
    <property type="entry name" value="P-loop_NTPase"/>
</dbReference>
<dbReference type="NCBIfam" id="NF003792">
    <property type="entry name" value="PRK05380.1"/>
    <property type="match status" value="1"/>
</dbReference>
<dbReference type="NCBIfam" id="TIGR00337">
    <property type="entry name" value="PyrG"/>
    <property type="match status" value="1"/>
</dbReference>
<dbReference type="PANTHER" id="PTHR11550">
    <property type="entry name" value="CTP SYNTHASE"/>
    <property type="match status" value="1"/>
</dbReference>
<dbReference type="PANTHER" id="PTHR11550:SF0">
    <property type="entry name" value="CTP SYNTHASE-RELATED"/>
    <property type="match status" value="1"/>
</dbReference>
<dbReference type="Pfam" id="PF06418">
    <property type="entry name" value="CTP_synth_N"/>
    <property type="match status" value="1"/>
</dbReference>
<dbReference type="Pfam" id="PF00117">
    <property type="entry name" value="GATase"/>
    <property type="match status" value="1"/>
</dbReference>
<dbReference type="SUPFAM" id="SSF52317">
    <property type="entry name" value="Class I glutamine amidotransferase-like"/>
    <property type="match status" value="1"/>
</dbReference>
<dbReference type="SUPFAM" id="SSF52540">
    <property type="entry name" value="P-loop containing nucleoside triphosphate hydrolases"/>
    <property type="match status" value="1"/>
</dbReference>
<dbReference type="PROSITE" id="PS51273">
    <property type="entry name" value="GATASE_TYPE_1"/>
    <property type="match status" value="1"/>
</dbReference>
<keyword id="KW-0067">ATP-binding</keyword>
<keyword id="KW-0315">Glutamine amidotransferase</keyword>
<keyword id="KW-0436">Ligase</keyword>
<keyword id="KW-0460">Magnesium</keyword>
<keyword id="KW-0479">Metal-binding</keyword>
<keyword id="KW-0547">Nucleotide-binding</keyword>
<keyword id="KW-0665">Pyrimidine biosynthesis</keyword>
<comment type="function">
    <text evidence="1">Catalyzes the ATP-dependent amination of UTP to CTP with either L-glutamine or ammonia as the source of nitrogen. Regulates intracellular CTP levels through interactions with the four ribonucleotide triphosphates.</text>
</comment>
<comment type="catalytic activity">
    <reaction evidence="1">
        <text>UTP + L-glutamine + ATP + H2O = CTP + L-glutamate + ADP + phosphate + 2 H(+)</text>
        <dbReference type="Rhea" id="RHEA:26426"/>
        <dbReference type="ChEBI" id="CHEBI:15377"/>
        <dbReference type="ChEBI" id="CHEBI:15378"/>
        <dbReference type="ChEBI" id="CHEBI:29985"/>
        <dbReference type="ChEBI" id="CHEBI:30616"/>
        <dbReference type="ChEBI" id="CHEBI:37563"/>
        <dbReference type="ChEBI" id="CHEBI:43474"/>
        <dbReference type="ChEBI" id="CHEBI:46398"/>
        <dbReference type="ChEBI" id="CHEBI:58359"/>
        <dbReference type="ChEBI" id="CHEBI:456216"/>
        <dbReference type="EC" id="6.3.4.2"/>
    </reaction>
</comment>
<comment type="catalytic activity">
    <reaction evidence="1">
        <text>L-glutamine + H2O = L-glutamate + NH4(+)</text>
        <dbReference type="Rhea" id="RHEA:15889"/>
        <dbReference type="ChEBI" id="CHEBI:15377"/>
        <dbReference type="ChEBI" id="CHEBI:28938"/>
        <dbReference type="ChEBI" id="CHEBI:29985"/>
        <dbReference type="ChEBI" id="CHEBI:58359"/>
    </reaction>
</comment>
<comment type="catalytic activity">
    <reaction evidence="1">
        <text>UTP + NH4(+) + ATP = CTP + ADP + phosphate + 2 H(+)</text>
        <dbReference type="Rhea" id="RHEA:16597"/>
        <dbReference type="ChEBI" id="CHEBI:15378"/>
        <dbReference type="ChEBI" id="CHEBI:28938"/>
        <dbReference type="ChEBI" id="CHEBI:30616"/>
        <dbReference type="ChEBI" id="CHEBI:37563"/>
        <dbReference type="ChEBI" id="CHEBI:43474"/>
        <dbReference type="ChEBI" id="CHEBI:46398"/>
        <dbReference type="ChEBI" id="CHEBI:456216"/>
    </reaction>
</comment>
<comment type="activity regulation">
    <text evidence="1">Allosterically activated by GTP, when glutamine is the substrate; GTP has no effect on the reaction when ammonia is the substrate. The allosteric effector GTP functions by stabilizing the protein conformation that binds the tetrahedral intermediate(s) formed during glutamine hydrolysis. Inhibited by the product CTP, via allosteric rather than competitive inhibition.</text>
</comment>
<comment type="pathway">
    <text evidence="1">Pyrimidine metabolism; CTP biosynthesis via de novo pathway; CTP from UDP: step 2/2.</text>
</comment>
<comment type="subunit">
    <text evidence="1">Homotetramer.</text>
</comment>
<comment type="miscellaneous">
    <text evidence="1">CTPSs have evolved a hybrid strategy for distinguishing between UTP and CTP. The overlapping regions of the product feedback inhibitory and substrate sites recognize a common feature in both compounds, the triphosphate moiety. To differentiate isosteric substrate and product pyrimidine rings, an additional pocket far from the expected kinase/ligase catalytic site, specifically recognizes the cytosine and ribose portions of the product inhibitor.</text>
</comment>
<comment type="similarity">
    <text evidence="1">Belongs to the CTP synthase family.</text>
</comment>
<comment type="sequence caution" evidence="2">
    <conflict type="erroneous initiation">
        <sequence resource="EMBL-CDS" id="AAS70136"/>
    </conflict>
    <text>Extended N-terminus.</text>
</comment>
<feature type="chain" id="PRO_0000138194" description="CTP synthase">
    <location>
        <begin position="1"/>
        <end position="538"/>
    </location>
</feature>
<feature type="domain" description="Glutamine amidotransferase type-1" evidence="1">
    <location>
        <begin position="295"/>
        <end position="537"/>
    </location>
</feature>
<feature type="region of interest" description="Amidoligase domain" evidence="1">
    <location>
        <begin position="1"/>
        <end position="270"/>
    </location>
</feature>
<feature type="active site" description="Nucleophile; for glutamine hydrolysis" evidence="1">
    <location>
        <position position="384"/>
    </location>
</feature>
<feature type="active site" evidence="1">
    <location>
        <position position="510"/>
    </location>
</feature>
<feature type="active site" evidence="1">
    <location>
        <position position="512"/>
    </location>
</feature>
<feature type="binding site" evidence="1">
    <location>
        <position position="15"/>
    </location>
    <ligand>
        <name>CTP</name>
        <dbReference type="ChEBI" id="CHEBI:37563"/>
        <note>allosteric inhibitor</note>
    </ligand>
</feature>
<feature type="binding site" evidence="1">
    <location>
        <position position="15"/>
    </location>
    <ligand>
        <name>UTP</name>
        <dbReference type="ChEBI" id="CHEBI:46398"/>
    </ligand>
</feature>
<feature type="binding site" evidence="1">
    <location>
        <begin position="16"/>
        <end position="21"/>
    </location>
    <ligand>
        <name>ATP</name>
        <dbReference type="ChEBI" id="CHEBI:30616"/>
    </ligand>
</feature>
<feature type="binding site" evidence="1">
    <location>
        <position position="56"/>
    </location>
    <ligand>
        <name>L-glutamine</name>
        <dbReference type="ChEBI" id="CHEBI:58359"/>
    </ligand>
</feature>
<feature type="binding site" evidence="1">
    <location>
        <position position="73"/>
    </location>
    <ligand>
        <name>ATP</name>
        <dbReference type="ChEBI" id="CHEBI:30616"/>
    </ligand>
</feature>
<feature type="binding site" evidence="1">
    <location>
        <position position="73"/>
    </location>
    <ligand>
        <name>Mg(2+)</name>
        <dbReference type="ChEBI" id="CHEBI:18420"/>
    </ligand>
</feature>
<feature type="binding site" evidence="1">
    <location>
        <position position="143"/>
    </location>
    <ligand>
        <name>Mg(2+)</name>
        <dbReference type="ChEBI" id="CHEBI:18420"/>
    </ligand>
</feature>
<feature type="binding site" evidence="1">
    <location>
        <begin position="150"/>
        <end position="152"/>
    </location>
    <ligand>
        <name>CTP</name>
        <dbReference type="ChEBI" id="CHEBI:37563"/>
        <note>allosteric inhibitor</note>
    </ligand>
</feature>
<feature type="binding site" evidence="1">
    <location>
        <begin position="190"/>
        <end position="195"/>
    </location>
    <ligand>
        <name>CTP</name>
        <dbReference type="ChEBI" id="CHEBI:37563"/>
        <note>allosteric inhibitor</note>
    </ligand>
</feature>
<feature type="binding site" evidence="1">
    <location>
        <begin position="190"/>
        <end position="195"/>
    </location>
    <ligand>
        <name>UTP</name>
        <dbReference type="ChEBI" id="CHEBI:46398"/>
    </ligand>
</feature>
<feature type="binding site" evidence="1">
    <location>
        <position position="226"/>
    </location>
    <ligand>
        <name>CTP</name>
        <dbReference type="ChEBI" id="CHEBI:37563"/>
        <note>allosteric inhibitor</note>
    </ligand>
</feature>
<feature type="binding site" evidence="1">
    <location>
        <position position="226"/>
    </location>
    <ligand>
        <name>UTP</name>
        <dbReference type="ChEBI" id="CHEBI:46398"/>
    </ligand>
</feature>
<feature type="binding site" evidence="1">
    <location>
        <position position="357"/>
    </location>
    <ligand>
        <name>L-glutamine</name>
        <dbReference type="ChEBI" id="CHEBI:58359"/>
    </ligand>
</feature>
<feature type="binding site" evidence="1">
    <location>
        <begin position="385"/>
        <end position="388"/>
    </location>
    <ligand>
        <name>L-glutamine</name>
        <dbReference type="ChEBI" id="CHEBI:58359"/>
    </ligand>
</feature>
<feature type="binding site" evidence="1">
    <location>
        <position position="408"/>
    </location>
    <ligand>
        <name>L-glutamine</name>
        <dbReference type="ChEBI" id="CHEBI:58359"/>
    </ligand>
</feature>
<feature type="binding site" evidence="1">
    <location>
        <position position="465"/>
    </location>
    <ligand>
        <name>L-glutamine</name>
        <dbReference type="ChEBI" id="CHEBI:58359"/>
    </ligand>
</feature>